<dbReference type="EMBL" id="CR860481">
    <property type="protein sequence ID" value="CAH92603.1"/>
    <property type="molecule type" value="mRNA"/>
</dbReference>
<dbReference type="RefSeq" id="NP_001126525.1">
    <property type="nucleotide sequence ID" value="NM_001133053.1"/>
</dbReference>
<dbReference type="SMR" id="Q5R6K7"/>
<dbReference type="FunCoup" id="Q5R6K7">
    <property type="interactions" value="2263"/>
</dbReference>
<dbReference type="STRING" id="9601.ENSPPYP00000012754"/>
<dbReference type="GeneID" id="100173514"/>
<dbReference type="KEGG" id="pon:100173514"/>
<dbReference type="CTD" id="7485"/>
<dbReference type="eggNOG" id="KOG4253">
    <property type="taxonomic scope" value="Eukaryota"/>
</dbReference>
<dbReference type="InParanoid" id="Q5R6K7"/>
<dbReference type="OrthoDB" id="69461at2759"/>
<dbReference type="Proteomes" id="UP000001595">
    <property type="component" value="Unplaced"/>
</dbReference>
<dbReference type="GO" id="GO:0005789">
    <property type="term" value="C:endoplasmic reticulum membrane"/>
    <property type="evidence" value="ECO:0007669"/>
    <property type="project" value="UniProtKB-SubCell"/>
</dbReference>
<dbReference type="GO" id="GO:0043529">
    <property type="term" value="C:GET complex"/>
    <property type="evidence" value="ECO:0000250"/>
    <property type="project" value="UniProtKB"/>
</dbReference>
<dbReference type="GO" id="GO:0043495">
    <property type="term" value="F:protein-membrane adaptor activity"/>
    <property type="evidence" value="ECO:0007669"/>
    <property type="project" value="TreeGrafter"/>
</dbReference>
<dbReference type="GO" id="GO:0045048">
    <property type="term" value="P:protein insertion into ER membrane"/>
    <property type="evidence" value="ECO:0000250"/>
    <property type="project" value="UniProtKB"/>
</dbReference>
<dbReference type="GO" id="GO:0050821">
    <property type="term" value="P:protein stabilization"/>
    <property type="evidence" value="ECO:0000250"/>
    <property type="project" value="UniProtKB"/>
</dbReference>
<dbReference type="GO" id="GO:0071816">
    <property type="term" value="P:tail-anchored membrane protein insertion into ER membrane"/>
    <property type="evidence" value="ECO:0000250"/>
    <property type="project" value="UniProtKB"/>
</dbReference>
<dbReference type="FunFam" id="1.10.287.660:FF:000004">
    <property type="entry name" value="tail-anchored protein insertion receptor WRB"/>
    <property type="match status" value="1"/>
</dbReference>
<dbReference type="Gene3D" id="1.10.287.660">
    <property type="entry name" value="Helix hairpin bin"/>
    <property type="match status" value="1"/>
</dbReference>
<dbReference type="InterPro" id="IPR028945">
    <property type="entry name" value="Get1"/>
</dbReference>
<dbReference type="InterPro" id="IPR029012">
    <property type="entry name" value="Helix_hairpin_bin_sf"/>
</dbReference>
<dbReference type="PANTHER" id="PTHR42650:SF1">
    <property type="entry name" value="GUIDED ENTRY OF TAIL-ANCHORED PROTEINS FACTOR 1"/>
    <property type="match status" value="1"/>
</dbReference>
<dbReference type="PANTHER" id="PTHR42650">
    <property type="entry name" value="TAIL-ANCHORED PROTEIN INSERTION RECEPTOR WRB"/>
    <property type="match status" value="1"/>
</dbReference>
<dbReference type="Pfam" id="PF04420">
    <property type="entry name" value="CHD5"/>
    <property type="match status" value="1"/>
</dbReference>
<accession>Q5R6K7</accession>
<gene>
    <name evidence="2" type="primary">GET1</name>
    <name evidence="2" type="synonym">WRB</name>
</gene>
<evidence type="ECO:0000250" key="1"/>
<evidence type="ECO:0000250" key="2">
    <source>
        <dbReference type="UniProtKB" id="O00258"/>
    </source>
</evidence>
<evidence type="ECO:0000255" key="3"/>
<evidence type="ECO:0000305" key="4"/>
<keyword id="KW-0175">Coiled coil</keyword>
<keyword id="KW-0256">Endoplasmic reticulum</keyword>
<keyword id="KW-0472">Membrane</keyword>
<keyword id="KW-1185">Reference proteome</keyword>
<keyword id="KW-0812">Transmembrane</keyword>
<keyword id="KW-1133">Transmembrane helix</keyword>
<feature type="chain" id="PRO_0000065981" description="Guided entry of tail-anchored proteins factor 1">
    <location>
        <begin position="1"/>
        <end position="174"/>
    </location>
</feature>
<feature type="topological domain" description="Lumenal" evidence="3">
    <location>
        <begin position="1"/>
        <end position="8"/>
    </location>
</feature>
<feature type="transmembrane region" description="Helical" evidence="3">
    <location>
        <begin position="9"/>
        <end position="29"/>
    </location>
</feature>
<feature type="topological domain" description="Cytoplasmic" evidence="3">
    <location>
        <begin position="30"/>
        <end position="99"/>
    </location>
</feature>
<feature type="transmembrane region" description="Helical" evidence="3">
    <location>
        <begin position="100"/>
        <end position="120"/>
    </location>
</feature>
<feature type="topological domain" description="Lumenal" evidence="3">
    <location>
        <begin position="121"/>
        <end position="148"/>
    </location>
</feature>
<feature type="transmembrane region" description="Helical" evidence="3">
    <location>
        <begin position="149"/>
        <end position="169"/>
    </location>
</feature>
<feature type="topological domain" description="Cytoplasmic" evidence="3">
    <location>
        <begin position="170"/>
        <end position="174"/>
    </location>
</feature>
<feature type="region of interest" description="Interaction with GET3/TRC40" evidence="1">
    <location>
        <begin position="39"/>
        <end position="97"/>
    </location>
</feature>
<feature type="coiled-coil region" evidence="3">
    <location>
        <begin position="39"/>
        <end position="94"/>
    </location>
</feature>
<proteinExistence type="evidence at transcript level"/>
<sequence length="174" mass="19766">MSSAAADHWAWLLVLSFVFGCNVLRVLLPSFSSFMSRVLQKDAEQESQMRAEIQDMKQELSTVNMMDEFARYARLERKINKMTDKLKTHVKARTAQLAKIKWVISVAFYVLQAALMISLIWKYYSVPVAVVPSKWITPLDRLVAFPTRVAGGVGITCWILVCNKVVAIVLHPFS</sequence>
<comment type="function">
    <text evidence="2">Required for the post-translational delivery of tail-anchored (TA) proteins to the endoplasmic reticulum. Together with CAMLG/GET2, acts as a membrane receptor for soluble GET3/TRC40, which recognizes and selectively binds the transmembrane domain of TA proteins in the cytosol. Required to ensure correct topology and ER insertion of CAMLG.</text>
</comment>
<comment type="subunit">
    <text evidence="2">Component of the Golgi to ER traffic (GET) complex, which is composed of GET1/WRB, CAMLG/GET2 and GET3. Within the complex, GET1 and CAMLG form a heterotetramer which is stabilized by phosphatidylinositol binding and which binds to the GET3 homodimer. Interacts with CAMLG (via C-terminus). GET3 shows a higher affinity for CAMLG than for GET1.</text>
</comment>
<comment type="subcellular location">
    <subcellularLocation>
        <location evidence="2">Endoplasmic reticulum membrane</location>
        <topology evidence="3">Multi-pass membrane protein</topology>
    </subcellularLocation>
</comment>
<comment type="similarity">
    <text evidence="4">Belongs to the WRB/GET1 family.</text>
</comment>
<protein>
    <recommendedName>
        <fullName evidence="2">Guided entry of tail-anchored proteins factor 1</fullName>
    </recommendedName>
    <alternativeName>
        <fullName>Tail-anchored protein insertion receptor WRB</fullName>
    </alternativeName>
    <alternativeName>
        <fullName>Tryptophan-rich basic protein</fullName>
    </alternativeName>
</protein>
<name>GET1_PONAB</name>
<organism>
    <name type="scientific">Pongo abelii</name>
    <name type="common">Sumatran orangutan</name>
    <name type="synonym">Pongo pygmaeus abelii</name>
    <dbReference type="NCBI Taxonomy" id="9601"/>
    <lineage>
        <taxon>Eukaryota</taxon>
        <taxon>Metazoa</taxon>
        <taxon>Chordata</taxon>
        <taxon>Craniata</taxon>
        <taxon>Vertebrata</taxon>
        <taxon>Euteleostomi</taxon>
        <taxon>Mammalia</taxon>
        <taxon>Eutheria</taxon>
        <taxon>Euarchontoglires</taxon>
        <taxon>Primates</taxon>
        <taxon>Haplorrhini</taxon>
        <taxon>Catarrhini</taxon>
        <taxon>Hominidae</taxon>
        <taxon>Pongo</taxon>
    </lineage>
</organism>
<reference key="1">
    <citation type="submission" date="2004-11" db="EMBL/GenBank/DDBJ databases">
        <authorList>
            <consortium name="The German cDNA consortium"/>
        </authorList>
    </citation>
    <scope>NUCLEOTIDE SEQUENCE [LARGE SCALE MRNA]</scope>
    <source>
        <tissue>Kidney</tissue>
    </source>
</reference>